<organism>
    <name type="scientific">Pectobacterium atrosepticum (strain SCRI 1043 / ATCC BAA-672)</name>
    <name type="common">Erwinia carotovora subsp. atroseptica</name>
    <dbReference type="NCBI Taxonomy" id="218491"/>
    <lineage>
        <taxon>Bacteria</taxon>
        <taxon>Pseudomonadati</taxon>
        <taxon>Pseudomonadota</taxon>
        <taxon>Gammaproteobacteria</taxon>
        <taxon>Enterobacterales</taxon>
        <taxon>Pectobacteriaceae</taxon>
        <taxon>Pectobacterium</taxon>
    </lineage>
</organism>
<sequence length="296" mass="32178">MIKQYLQVTKPGIIFGNLISVIGGFLLAAQGRIDYPLFLATLVGVSLVVASGCVFNNVIDRDIDKKMERTKNRVLVKGLISLKVTLVYASLLGIAGFALLYVAANPLAMWLAVMGFVVYVGVYSLYMKRHSVYGTLIGSLSGAAPPVIGYCAVSNQFDAGALILLLIFSLWQMPHSYAIAIFRFKDYQAANIPVLPVVKGISVAKNHITLYIVAFAIATLMLSLGGYAGYKYLIVAAAVSVWWLGMALSGYKNAIDDRVWARKLFVFSIVAITSLSVMMSVDSMAPAHEVLLTYLR</sequence>
<reference key="1">
    <citation type="journal article" date="2004" name="Proc. Natl. Acad. Sci. U.S.A.">
        <title>Genome sequence of the enterobacterial phytopathogen Erwinia carotovora subsp. atroseptica and characterization of virulence factors.</title>
        <authorList>
            <person name="Bell K.S."/>
            <person name="Sebaihia M."/>
            <person name="Pritchard L."/>
            <person name="Holden M.T.G."/>
            <person name="Hyman L.J."/>
            <person name="Holeva M.C."/>
            <person name="Thomson N.R."/>
            <person name="Bentley S.D."/>
            <person name="Churcher L.J.C."/>
            <person name="Mungall K."/>
            <person name="Atkin R."/>
            <person name="Bason N."/>
            <person name="Brooks K."/>
            <person name="Chillingworth T."/>
            <person name="Clark K."/>
            <person name="Doggett J."/>
            <person name="Fraser A."/>
            <person name="Hance Z."/>
            <person name="Hauser H."/>
            <person name="Jagels K."/>
            <person name="Moule S."/>
            <person name="Norbertczak H."/>
            <person name="Ormond D."/>
            <person name="Price C."/>
            <person name="Quail M.A."/>
            <person name="Sanders M."/>
            <person name="Walker D."/>
            <person name="Whitehead S."/>
            <person name="Salmond G.P.C."/>
            <person name="Birch P.R.J."/>
            <person name="Parkhill J."/>
            <person name="Toth I.K."/>
        </authorList>
    </citation>
    <scope>NUCLEOTIDE SEQUENCE [LARGE SCALE GENOMIC DNA]</scope>
    <source>
        <strain>SCRI 1043 / ATCC BAA-672</strain>
    </source>
</reference>
<gene>
    <name evidence="1" type="primary">cyoE</name>
    <name type="ordered locus">ECA1139</name>
</gene>
<protein>
    <recommendedName>
        <fullName evidence="1">Protoheme IX farnesyltransferase</fullName>
        <ecNumber evidence="1">2.5.1.141</ecNumber>
    </recommendedName>
    <alternativeName>
        <fullName evidence="1">Heme B farnesyltransferase</fullName>
    </alternativeName>
    <alternativeName>
        <fullName evidence="1">Heme O synthase</fullName>
    </alternativeName>
</protein>
<proteinExistence type="inferred from homology"/>
<evidence type="ECO:0000255" key="1">
    <source>
        <dbReference type="HAMAP-Rule" id="MF_00154"/>
    </source>
</evidence>
<keyword id="KW-0997">Cell inner membrane</keyword>
<keyword id="KW-1003">Cell membrane</keyword>
<keyword id="KW-0350">Heme biosynthesis</keyword>
<keyword id="KW-0472">Membrane</keyword>
<keyword id="KW-1185">Reference proteome</keyword>
<keyword id="KW-0808">Transferase</keyword>
<keyword id="KW-0812">Transmembrane</keyword>
<keyword id="KW-1133">Transmembrane helix</keyword>
<comment type="function">
    <text evidence="1">Converts heme B (protoheme IX) to heme O by substitution of the vinyl group on carbon 2 of heme B porphyrin ring with a hydroxyethyl farnesyl side group.</text>
</comment>
<comment type="catalytic activity">
    <reaction evidence="1">
        <text>heme b + (2E,6E)-farnesyl diphosphate + H2O = Fe(II)-heme o + diphosphate</text>
        <dbReference type="Rhea" id="RHEA:28070"/>
        <dbReference type="ChEBI" id="CHEBI:15377"/>
        <dbReference type="ChEBI" id="CHEBI:33019"/>
        <dbReference type="ChEBI" id="CHEBI:60344"/>
        <dbReference type="ChEBI" id="CHEBI:60530"/>
        <dbReference type="ChEBI" id="CHEBI:175763"/>
        <dbReference type="EC" id="2.5.1.141"/>
    </reaction>
</comment>
<comment type="pathway">
    <text evidence="1">Porphyrin-containing compound metabolism; heme O biosynthesis; heme O from protoheme: step 1/1.</text>
</comment>
<comment type="subcellular location">
    <subcellularLocation>
        <location evidence="1">Cell inner membrane</location>
        <topology evidence="1">Multi-pass membrane protein</topology>
    </subcellularLocation>
</comment>
<comment type="miscellaneous">
    <text evidence="1">Carbon 2 of the heme B porphyrin ring is defined according to the Fischer nomenclature.</text>
</comment>
<comment type="similarity">
    <text evidence="1">Belongs to the UbiA prenyltransferase family. Protoheme IX farnesyltransferase subfamily.</text>
</comment>
<dbReference type="EC" id="2.5.1.141" evidence="1"/>
<dbReference type="EMBL" id="BX950851">
    <property type="protein sequence ID" value="CAG74049.1"/>
    <property type="molecule type" value="Genomic_DNA"/>
</dbReference>
<dbReference type="RefSeq" id="WP_011092733.1">
    <property type="nucleotide sequence ID" value="NC_004547.2"/>
</dbReference>
<dbReference type="SMR" id="Q6D836"/>
<dbReference type="STRING" id="218491.ECA1139"/>
<dbReference type="GeneID" id="57207953"/>
<dbReference type="KEGG" id="eca:ECA1139"/>
<dbReference type="PATRIC" id="fig|218491.5.peg.1152"/>
<dbReference type="eggNOG" id="COG0109">
    <property type="taxonomic scope" value="Bacteria"/>
</dbReference>
<dbReference type="HOGENOM" id="CLU_029631_0_0_6"/>
<dbReference type="OrthoDB" id="9814417at2"/>
<dbReference type="UniPathway" id="UPA00834">
    <property type="reaction ID" value="UER00712"/>
</dbReference>
<dbReference type="Proteomes" id="UP000007966">
    <property type="component" value="Chromosome"/>
</dbReference>
<dbReference type="GO" id="GO:0005886">
    <property type="term" value="C:plasma membrane"/>
    <property type="evidence" value="ECO:0007669"/>
    <property type="project" value="UniProtKB-SubCell"/>
</dbReference>
<dbReference type="GO" id="GO:0008495">
    <property type="term" value="F:protoheme IX farnesyltransferase activity"/>
    <property type="evidence" value="ECO:0007669"/>
    <property type="project" value="UniProtKB-UniRule"/>
</dbReference>
<dbReference type="GO" id="GO:0048034">
    <property type="term" value="P:heme O biosynthetic process"/>
    <property type="evidence" value="ECO:0007669"/>
    <property type="project" value="UniProtKB-UniRule"/>
</dbReference>
<dbReference type="CDD" id="cd13957">
    <property type="entry name" value="PT_UbiA_Cox10"/>
    <property type="match status" value="1"/>
</dbReference>
<dbReference type="FunFam" id="1.10.357.140:FF:000001">
    <property type="entry name" value="Protoheme IX farnesyltransferase"/>
    <property type="match status" value="1"/>
</dbReference>
<dbReference type="Gene3D" id="1.10.357.140">
    <property type="entry name" value="UbiA prenyltransferase"/>
    <property type="match status" value="1"/>
</dbReference>
<dbReference type="HAMAP" id="MF_00154">
    <property type="entry name" value="CyoE_CtaB"/>
    <property type="match status" value="1"/>
</dbReference>
<dbReference type="InterPro" id="IPR006369">
    <property type="entry name" value="Protohaem_IX_farnesylTrfase"/>
</dbReference>
<dbReference type="InterPro" id="IPR000537">
    <property type="entry name" value="UbiA_prenyltransferase"/>
</dbReference>
<dbReference type="InterPro" id="IPR030470">
    <property type="entry name" value="UbiA_prenylTrfase_CS"/>
</dbReference>
<dbReference type="InterPro" id="IPR044878">
    <property type="entry name" value="UbiA_sf"/>
</dbReference>
<dbReference type="NCBIfam" id="TIGR01473">
    <property type="entry name" value="cyoE_ctaB"/>
    <property type="match status" value="1"/>
</dbReference>
<dbReference type="NCBIfam" id="NF003348">
    <property type="entry name" value="PRK04375.1-1"/>
    <property type="match status" value="1"/>
</dbReference>
<dbReference type="PANTHER" id="PTHR43448">
    <property type="entry name" value="PROTOHEME IX FARNESYLTRANSFERASE, MITOCHONDRIAL"/>
    <property type="match status" value="1"/>
</dbReference>
<dbReference type="PANTHER" id="PTHR43448:SF2">
    <property type="entry name" value="PROTOHEME IX FARNESYLTRANSFERASE, MITOCHONDRIAL"/>
    <property type="match status" value="1"/>
</dbReference>
<dbReference type="Pfam" id="PF01040">
    <property type="entry name" value="UbiA"/>
    <property type="match status" value="1"/>
</dbReference>
<dbReference type="PROSITE" id="PS00943">
    <property type="entry name" value="UBIA"/>
    <property type="match status" value="1"/>
</dbReference>
<accession>Q6D836</accession>
<feature type="chain" id="PRO_0000326891" description="Protoheme IX farnesyltransferase">
    <location>
        <begin position="1"/>
        <end position="296"/>
    </location>
</feature>
<feature type="transmembrane region" description="Helical" evidence="1">
    <location>
        <begin position="11"/>
        <end position="31"/>
    </location>
</feature>
<feature type="transmembrane region" description="Helical" evidence="1">
    <location>
        <begin position="35"/>
        <end position="55"/>
    </location>
</feature>
<feature type="transmembrane region" description="Helical" evidence="1">
    <location>
        <begin position="84"/>
        <end position="104"/>
    </location>
</feature>
<feature type="transmembrane region" description="Helical" evidence="1">
    <location>
        <begin position="107"/>
        <end position="127"/>
    </location>
</feature>
<feature type="transmembrane region" description="Helical" evidence="1">
    <location>
        <begin position="132"/>
        <end position="152"/>
    </location>
</feature>
<feature type="transmembrane region" description="Helical" evidence="1">
    <location>
        <begin position="162"/>
        <end position="182"/>
    </location>
</feature>
<feature type="transmembrane region" description="Helical" evidence="1">
    <location>
        <begin position="208"/>
        <end position="228"/>
    </location>
</feature>
<feature type="transmembrane region" description="Helical" evidence="1">
    <location>
        <begin position="229"/>
        <end position="249"/>
    </location>
</feature>
<feature type="transmembrane region" description="Helical" evidence="1">
    <location>
        <begin position="264"/>
        <end position="284"/>
    </location>
</feature>
<name>CYOE_PECAS</name>